<gene>
    <name evidence="1" type="primary">folD</name>
    <name type="ordered locus">RC1_2876</name>
</gene>
<proteinExistence type="inferred from homology"/>
<comment type="function">
    <text evidence="1">Catalyzes the oxidation of 5,10-methylenetetrahydrofolate to 5,10-methenyltetrahydrofolate and then the hydrolysis of 5,10-methenyltetrahydrofolate to 10-formyltetrahydrofolate.</text>
</comment>
<comment type="catalytic activity">
    <reaction evidence="1">
        <text>(6R)-5,10-methylene-5,6,7,8-tetrahydrofolate + NADP(+) = (6R)-5,10-methenyltetrahydrofolate + NADPH</text>
        <dbReference type="Rhea" id="RHEA:22812"/>
        <dbReference type="ChEBI" id="CHEBI:15636"/>
        <dbReference type="ChEBI" id="CHEBI:57455"/>
        <dbReference type="ChEBI" id="CHEBI:57783"/>
        <dbReference type="ChEBI" id="CHEBI:58349"/>
        <dbReference type="EC" id="1.5.1.5"/>
    </reaction>
</comment>
<comment type="catalytic activity">
    <reaction evidence="1">
        <text>(6R)-5,10-methenyltetrahydrofolate + H2O = (6R)-10-formyltetrahydrofolate + H(+)</text>
        <dbReference type="Rhea" id="RHEA:23700"/>
        <dbReference type="ChEBI" id="CHEBI:15377"/>
        <dbReference type="ChEBI" id="CHEBI:15378"/>
        <dbReference type="ChEBI" id="CHEBI:57455"/>
        <dbReference type="ChEBI" id="CHEBI:195366"/>
        <dbReference type="EC" id="3.5.4.9"/>
    </reaction>
</comment>
<comment type="pathway">
    <text evidence="1">One-carbon metabolism; tetrahydrofolate interconversion.</text>
</comment>
<comment type="subunit">
    <text evidence="1">Homodimer.</text>
</comment>
<comment type="similarity">
    <text evidence="1">Belongs to the tetrahydrofolate dehydrogenase/cyclohydrolase family.</text>
</comment>
<protein>
    <recommendedName>
        <fullName evidence="1">Bifunctional protein FolD</fullName>
    </recommendedName>
    <domain>
        <recommendedName>
            <fullName evidence="1">Methylenetetrahydrofolate dehydrogenase</fullName>
            <ecNumber evidence="1">1.5.1.5</ecNumber>
        </recommendedName>
    </domain>
    <domain>
        <recommendedName>
            <fullName evidence="1">Methenyltetrahydrofolate cyclohydrolase</fullName>
            <ecNumber evidence="1">3.5.4.9</ecNumber>
        </recommendedName>
    </domain>
</protein>
<evidence type="ECO:0000255" key="1">
    <source>
        <dbReference type="HAMAP-Rule" id="MF_01576"/>
    </source>
</evidence>
<reference key="1">
    <citation type="submission" date="2007-03" db="EMBL/GenBank/DDBJ databases">
        <title>Genome sequence of Rhodospirillum centenum.</title>
        <authorList>
            <person name="Touchman J.W."/>
            <person name="Bauer C."/>
            <person name="Blankenship R.E."/>
        </authorList>
    </citation>
    <scope>NUCLEOTIDE SEQUENCE [LARGE SCALE GENOMIC DNA]</scope>
    <source>
        <strain>ATCC 51521 / SW</strain>
    </source>
</reference>
<organism>
    <name type="scientific">Rhodospirillum centenum (strain ATCC 51521 / SW)</name>
    <dbReference type="NCBI Taxonomy" id="414684"/>
    <lineage>
        <taxon>Bacteria</taxon>
        <taxon>Pseudomonadati</taxon>
        <taxon>Pseudomonadota</taxon>
        <taxon>Alphaproteobacteria</taxon>
        <taxon>Rhodospirillales</taxon>
        <taxon>Rhodospirillaceae</taxon>
        <taxon>Rhodospirillum</taxon>
    </lineage>
</organism>
<keyword id="KW-0028">Amino-acid biosynthesis</keyword>
<keyword id="KW-0368">Histidine biosynthesis</keyword>
<keyword id="KW-0378">Hydrolase</keyword>
<keyword id="KW-0486">Methionine biosynthesis</keyword>
<keyword id="KW-0511">Multifunctional enzyme</keyword>
<keyword id="KW-0521">NADP</keyword>
<keyword id="KW-0554">One-carbon metabolism</keyword>
<keyword id="KW-0560">Oxidoreductase</keyword>
<keyword id="KW-0658">Purine biosynthesis</keyword>
<keyword id="KW-1185">Reference proteome</keyword>
<dbReference type="EC" id="1.5.1.5" evidence="1"/>
<dbReference type="EC" id="3.5.4.9" evidence="1"/>
<dbReference type="EMBL" id="CP000613">
    <property type="protein sequence ID" value="ACJ00244.1"/>
    <property type="molecule type" value="Genomic_DNA"/>
</dbReference>
<dbReference type="RefSeq" id="WP_012568024.1">
    <property type="nucleotide sequence ID" value="NC_011420.2"/>
</dbReference>
<dbReference type="SMR" id="B6IVC0"/>
<dbReference type="STRING" id="414684.RC1_2876"/>
<dbReference type="KEGG" id="rce:RC1_2876"/>
<dbReference type="eggNOG" id="COG0190">
    <property type="taxonomic scope" value="Bacteria"/>
</dbReference>
<dbReference type="HOGENOM" id="CLU_034045_2_1_5"/>
<dbReference type="OrthoDB" id="9803580at2"/>
<dbReference type="UniPathway" id="UPA00193"/>
<dbReference type="Proteomes" id="UP000001591">
    <property type="component" value="Chromosome"/>
</dbReference>
<dbReference type="GO" id="GO:0005829">
    <property type="term" value="C:cytosol"/>
    <property type="evidence" value="ECO:0007669"/>
    <property type="project" value="TreeGrafter"/>
</dbReference>
<dbReference type="GO" id="GO:0004477">
    <property type="term" value="F:methenyltetrahydrofolate cyclohydrolase activity"/>
    <property type="evidence" value="ECO:0007669"/>
    <property type="project" value="UniProtKB-UniRule"/>
</dbReference>
<dbReference type="GO" id="GO:0004488">
    <property type="term" value="F:methylenetetrahydrofolate dehydrogenase (NADP+) activity"/>
    <property type="evidence" value="ECO:0007669"/>
    <property type="project" value="UniProtKB-UniRule"/>
</dbReference>
<dbReference type="GO" id="GO:0000105">
    <property type="term" value="P:L-histidine biosynthetic process"/>
    <property type="evidence" value="ECO:0007669"/>
    <property type="project" value="UniProtKB-KW"/>
</dbReference>
<dbReference type="GO" id="GO:0009086">
    <property type="term" value="P:methionine biosynthetic process"/>
    <property type="evidence" value="ECO:0007669"/>
    <property type="project" value="UniProtKB-KW"/>
</dbReference>
<dbReference type="GO" id="GO:0006164">
    <property type="term" value="P:purine nucleotide biosynthetic process"/>
    <property type="evidence" value="ECO:0007669"/>
    <property type="project" value="UniProtKB-KW"/>
</dbReference>
<dbReference type="GO" id="GO:0035999">
    <property type="term" value="P:tetrahydrofolate interconversion"/>
    <property type="evidence" value="ECO:0007669"/>
    <property type="project" value="UniProtKB-UniRule"/>
</dbReference>
<dbReference type="CDD" id="cd01080">
    <property type="entry name" value="NAD_bind_m-THF_DH_Cyclohyd"/>
    <property type="match status" value="1"/>
</dbReference>
<dbReference type="FunFam" id="3.40.50.720:FF:000006">
    <property type="entry name" value="Bifunctional protein FolD"/>
    <property type="match status" value="1"/>
</dbReference>
<dbReference type="FunFam" id="3.40.50.10860:FF:000005">
    <property type="entry name" value="C-1-tetrahydrofolate synthase, cytoplasmic, putative"/>
    <property type="match status" value="1"/>
</dbReference>
<dbReference type="Gene3D" id="3.40.50.10860">
    <property type="entry name" value="Leucine Dehydrogenase, chain A, domain 1"/>
    <property type="match status" value="1"/>
</dbReference>
<dbReference type="Gene3D" id="3.40.50.720">
    <property type="entry name" value="NAD(P)-binding Rossmann-like Domain"/>
    <property type="match status" value="1"/>
</dbReference>
<dbReference type="HAMAP" id="MF_01576">
    <property type="entry name" value="THF_DHG_CYH"/>
    <property type="match status" value="1"/>
</dbReference>
<dbReference type="InterPro" id="IPR046346">
    <property type="entry name" value="Aminoacid_DH-like_N_sf"/>
</dbReference>
<dbReference type="InterPro" id="IPR036291">
    <property type="entry name" value="NAD(P)-bd_dom_sf"/>
</dbReference>
<dbReference type="InterPro" id="IPR000672">
    <property type="entry name" value="THF_DH/CycHdrlase"/>
</dbReference>
<dbReference type="InterPro" id="IPR020630">
    <property type="entry name" value="THF_DH/CycHdrlase_cat_dom"/>
</dbReference>
<dbReference type="InterPro" id="IPR020867">
    <property type="entry name" value="THF_DH/CycHdrlase_CS"/>
</dbReference>
<dbReference type="InterPro" id="IPR020631">
    <property type="entry name" value="THF_DH/CycHdrlase_NAD-bd_dom"/>
</dbReference>
<dbReference type="NCBIfam" id="NF010783">
    <property type="entry name" value="PRK14186.1"/>
    <property type="match status" value="1"/>
</dbReference>
<dbReference type="NCBIfam" id="NF010785">
    <property type="entry name" value="PRK14188.1"/>
    <property type="match status" value="1"/>
</dbReference>
<dbReference type="PANTHER" id="PTHR48099:SF5">
    <property type="entry name" value="C-1-TETRAHYDROFOLATE SYNTHASE, CYTOPLASMIC"/>
    <property type="match status" value="1"/>
</dbReference>
<dbReference type="PANTHER" id="PTHR48099">
    <property type="entry name" value="C-1-TETRAHYDROFOLATE SYNTHASE, CYTOPLASMIC-RELATED"/>
    <property type="match status" value="1"/>
</dbReference>
<dbReference type="Pfam" id="PF00763">
    <property type="entry name" value="THF_DHG_CYH"/>
    <property type="match status" value="1"/>
</dbReference>
<dbReference type="Pfam" id="PF02882">
    <property type="entry name" value="THF_DHG_CYH_C"/>
    <property type="match status" value="1"/>
</dbReference>
<dbReference type="PRINTS" id="PR00085">
    <property type="entry name" value="THFDHDRGNASE"/>
</dbReference>
<dbReference type="SUPFAM" id="SSF53223">
    <property type="entry name" value="Aminoacid dehydrogenase-like, N-terminal domain"/>
    <property type="match status" value="1"/>
</dbReference>
<dbReference type="SUPFAM" id="SSF51735">
    <property type="entry name" value="NAD(P)-binding Rossmann-fold domains"/>
    <property type="match status" value="1"/>
</dbReference>
<dbReference type="PROSITE" id="PS00766">
    <property type="entry name" value="THF_DHG_CYH_1"/>
    <property type="match status" value="1"/>
</dbReference>
<dbReference type="PROSITE" id="PS00767">
    <property type="entry name" value="THF_DHG_CYH_2"/>
    <property type="match status" value="1"/>
</dbReference>
<accession>B6IVC0</accession>
<feature type="chain" id="PRO_1000147514" description="Bifunctional protein FolD">
    <location>
        <begin position="1"/>
        <end position="304"/>
    </location>
</feature>
<feature type="binding site" evidence="1">
    <location>
        <begin position="167"/>
        <end position="169"/>
    </location>
    <ligand>
        <name>NADP(+)</name>
        <dbReference type="ChEBI" id="CHEBI:58349"/>
    </ligand>
</feature>
<feature type="binding site" evidence="1">
    <location>
        <position position="192"/>
    </location>
    <ligand>
        <name>NADP(+)</name>
        <dbReference type="ChEBI" id="CHEBI:58349"/>
    </ligand>
</feature>
<feature type="binding site" evidence="1">
    <location>
        <position position="233"/>
    </location>
    <ligand>
        <name>NADP(+)</name>
        <dbReference type="ChEBI" id="CHEBI:58349"/>
    </ligand>
</feature>
<name>FOLD_RHOCS</name>
<sequence>MTEARIIDGKAFAADLRGRIGAAVEHLRTAYALVPGLAVVLVGENPASQLYVKNKGEQTREAGMHSVTHRLPVDTTQEQLLRLIGQLNADPSIHGILVQLPLPPQIDPAAVLAAIDPDKDVDGFHVVNAGRLAVGLPGLVPCTPLGCLMLLKDVVGDLRGLNAVVVGRSNIVGKPMANLLLQANATVTVAHSHTVDLPEVCRGADILIAAVGRPEMIRGSWIKEGAIVIDVGINRVPARDPAAAAAGKTRVVGDVAFEEAKGIAGAITPVPGGVGPMTIACLLLNTLTAACRSKGITPPDDLMP</sequence>